<keyword id="KW-0030">Aminoacyl-tRNA synthetase</keyword>
<keyword id="KW-0067">ATP-binding</keyword>
<keyword id="KW-0963">Cytoplasm</keyword>
<keyword id="KW-0436">Ligase</keyword>
<keyword id="KW-0547">Nucleotide-binding</keyword>
<keyword id="KW-0648">Protein biosynthesis</keyword>
<comment type="catalytic activity">
    <reaction evidence="1">
        <text>tRNA(Gly) + glycine + ATP = glycyl-tRNA(Gly) + AMP + diphosphate</text>
        <dbReference type="Rhea" id="RHEA:16013"/>
        <dbReference type="Rhea" id="RHEA-COMP:9664"/>
        <dbReference type="Rhea" id="RHEA-COMP:9683"/>
        <dbReference type="ChEBI" id="CHEBI:30616"/>
        <dbReference type="ChEBI" id="CHEBI:33019"/>
        <dbReference type="ChEBI" id="CHEBI:57305"/>
        <dbReference type="ChEBI" id="CHEBI:78442"/>
        <dbReference type="ChEBI" id="CHEBI:78522"/>
        <dbReference type="ChEBI" id="CHEBI:456215"/>
        <dbReference type="EC" id="6.1.1.14"/>
    </reaction>
</comment>
<comment type="subunit">
    <text evidence="1">Tetramer of two alpha and two beta subunits.</text>
</comment>
<comment type="subcellular location">
    <subcellularLocation>
        <location evidence="1">Cytoplasm</location>
    </subcellularLocation>
</comment>
<comment type="similarity">
    <text evidence="1">Belongs to the class-II aminoacyl-tRNA synthetase family.</text>
</comment>
<gene>
    <name evidence="1" type="primary">glyQ</name>
    <name type="ordered locus">Tery_3866</name>
</gene>
<dbReference type="EC" id="6.1.1.14" evidence="1"/>
<dbReference type="EMBL" id="CP000393">
    <property type="protein sequence ID" value="ABG52905.1"/>
    <property type="molecule type" value="Genomic_DNA"/>
</dbReference>
<dbReference type="RefSeq" id="WP_011613235.1">
    <property type="nucleotide sequence ID" value="NC_008312.1"/>
</dbReference>
<dbReference type="SMR" id="Q10XW9"/>
<dbReference type="STRING" id="203124.Tery_3866"/>
<dbReference type="KEGG" id="ter:Tery_3866"/>
<dbReference type="eggNOG" id="COG0752">
    <property type="taxonomic scope" value="Bacteria"/>
</dbReference>
<dbReference type="HOGENOM" id="CLU_057066_1_0_3"/>
<dbReference type="OrthoDB" id="9802183at2"/>
<dbReference type="GO" id="GO:0005829">
    <property type="term" value="C:cytosol"/>
    <property type="evidence" value="ECO:0007669"/>
    <property type="project" value="TreeGrafter"/>
</dbReference>
<dbReference type="GO" id="GO:0005524">
    <property type="term" value="F:ATP binding"/>
    <property type="evidence" value="ECO:0007669"/>
    <property type="project" value="UniProtKB-UniRule"/>
</dbReference>
<dbReference type="GO" id="GO:0004820">
    <property type="term" value="F:glycine-tRNA ligase activity"/>
    <property type="evidence" value="ECO:0007669"/>
    <property type="project" value="UniProtKB-UniRule"/>
</dbReference>
<dbReference type="GO" id="GO:0006426">
    <property type="term" value="P:glycyl-tRNA aminoacylation"/>
    <property type="evidence" value="ECO:0007669"/>
    <property type="project" value="UniProtKB-UniRule"/>
</dbReference>
<dbReference type="CDD" id="cd00733">
    <property type="entry name" value="GlyRS_alpha_core"/>
    <property type="match status" value="1"/>
</dbReference>
<dbReference type="FunFam" id="3.30.930.10:FF:000006">
    <property type="entry name" value="Glycine--tRNA ligase alpha subunit"/>
    <property type="match status" value="1"/>
</dbReference>
<dbReference type="Gene3D" id="3.30.930.10">
    <property type="entry name" value="Bira Bifunctional Protein, Domain 2"/>
    <property type="match status" value="1"/>
</dbReference>
<dbReference type="Gene3D" id="1.20.58.180">
    <property type="entry name" value="Class II aaRS and biotin synthetases, domain 2"/>
    <property type="match status" value="1"/>
</dbReference>
<dbReference type="HAMAP" id="MF_00254">
    <property type="entry name" value="Gly_tRNA_synth_alpha"/>
    <property type="match status" value="1"/>
</dbReference>
<dbReference type="InterPro" id="IPR045864">
    <property type="entry name" value="aa-tRNA-synth_II/BPL/LPL"/>
</dbReference>
<dbReference type="InterPro" id="IPR006194">
    <property type="entry name" value="Gly-tRNA-synth_heterodimer"/>
</dbReference>
<dbReference type="InterPro" id="IPR002310">
    <property type="entry name" value="Gly-tRNA_ligase_asu"/>
</dbReference>
<dbReference type="NCBIfam" id="TIGR00388">
    <property type="entry name" value="glyQ"/>
    <property type="match status" value="1"/>
</dbReference>
<dbReference type="NCBIfam" id="NF006827">
    <property type="entry name" value="PRK09348.1"/>
    <property type="match status" value="1"/>
</dbReference>
<dbReference type="PANTHER" id="PTHR30075:SF2">
    <property type="entry name" value="GLYCINE--TRNA LIGASE, CHLOROPLASTIC_MITOCHONDRIAL 2"/>
    <property type="match status" value="1"/>
</dbReference>
<dbReference type="PANTHER" id="PTHR30075">
    <property type="entry name" value="GLYCYL-TRNA SYNTHETASE"/>
    <property type="match status" value="1"/>
</dbReference>
<dbReference type="Pfam" id="PF02091">
    <property type="entry name" value="tRNA-synt_2e"/>
    <property type="match status" value="1"/>
</dbReference>
<dbReference type="PRINTS" id="PR01044">
    <property type="entry name" value="TRNASYNTHGA"/>
</dbReference>
<dbReference type="SUPFAM" id="SSF55681">
    <property type="entry name" value="Class II aaRS and biotin synthetases"/>
    <property type="match status" value="1"/>
</dbReference>
<dbReference type="PROSITE" id="PS50861">
    <property type="entry name" value="AA_TRNA_LIGASE_II_GLYAB"/>
    <property type="match status" value="1"/>
</dbReference>
<reference key="1">
    <citation type="journal article" date="2015" name="Proc. Natl. Acad. Sci. U.S.A.">
        <title>Trichodesmium genome maintains abundant, widespread noncoding DNA in situ, despite oligotrophic lifestyle.</title>
        <authorList>
            <person name="Walworth N."/>
            <person name="Pfreundt U."/>
            <person name="Nelson W.C."/>
            <person name="Mincer T."/>
            <person name="Heidelberg J.F."/>
            <person name="Fu F."/>
            <person name="Waterbury J.B."/>
            <person name="Glavina del Rio T."/>
            <person name="Goodwin L."/>
            <person name="Kyrpides N.C."/>
            <person name="Land M.L."/>
            <person name="Woyke T."/>
            <person name="Hutchins D.A."/>
            <person name="Hess W.R."/>
            <person name="Webb E.A."/>
        </authorList>
    </citation>
    <scope>NUCLEOTIDE SEQUENCE [LARGE SCALE GENOMIC DNA]</scope>
    <source>
        <strain>IMS101</strain>
    </source>
</reference>
<accession>Q10XW9</accession>
<name>SYGA_TRIEI</name>
<proteinExistence type="inferred from homology"/>
<evidence type="ECO:0000255" key="1">
    <source>
        <dbReference type="HAMAP-Rule" id="MF_00254"/>
    </source>
</evidence>
<feature type="chain" id="PRO_1000047525" description="Glycine--tRNA ligase alpha subunit">
    <location>
        <begin position="1"/>
        <end position="294"/>
    </location>
</feature>
<sequence length="294" mass="34080">MNFQSVIATLNQFWSDRGCLIAQSYDTEKGAGTMNPHTFLRAIGPEPWSVAYVEPCRRPTDGRYGENPNRFQHYYQYQVLMKPSPNNIQDLYLDSLRALGIRPEDHDIRFVEDNWESPTLGAWGVGWEVWLDGMEITQFTYFQQCGSIDCRPVSIEITYGLERLAMYLQEVDAITKIAWTDNITYGDVYLQGEIEQCSYNFEASSPDFLFNLFGLYEQEAKQLIKRELVLPSLDYVLKCSHSFNLLDARGVISVTERTRYIGRIRNLARQVGQLYLQQREKLNFPLLKETMEAA</sequence>
<protein>
    <recommendedName>
        <fullName evidence="1">Glycine--tRNA ligase alpha subunit</fullName>
        <ecNumber evidence="1">6.1.1.14</ecNumber>
    </recommendedName>
    <alternativeName>
        <fullName evidence="1">Glycyl-tRNA synthetase alpha subunit</fullName>
        <shortName evidence="1">GlyRS</shortName>
    </alternativeName>
</protein>
<organism>
    <name type="scientific">Trichodesmium erythraeum (strain IMS101)</name>
    <dbReference type="NCBI Taxonomy" id="203124"/>
    <lineage>
        <taxon>Bacteria</taxon>
        <taxon>Bacillati</taxon>
        <taxon>Cyanobacteriota</taxon>
        <taxon>Cyanophyceae</taxon>
        <taxon>Oscillatoriophycideae</taxon>
        <taxon>Oscillatoriales</taxon>
        <taxon>Microcoleaceae</taxon>
        <taxon>Trichodesmium</taxon>
    </lineage>
</organism>